<gene>
    <name evidence="1" type="primary">proS</name>
    <name type="ordered locus">VP2333</name>
</gene>
<proteinExistence type="inferred from homology"/>
<keyword id="KW-0030">Aminoacyl-tRNA synthetase</keyword>
<keyword id="KW-0067">ATP-binding</keyword>
<keyword id="KW-0963">Cytoplasm</keyword>
<keyword id="KW-0436">Ligase</keyword>
<keyword id="KW-0547">Nucleotide-binding</keyword>
<keyword id="KW-0648">Protein biosynthesis</keyword>
<comment type="function">
    <text evidence="1">Catalyzes the attachment of proline to tRNA(Pro) in a two-step reaction: proline is first activated by ATP to form Pro-AMP and then transferred to the acceptor end of tRNA(Pro). As ProRS can inadvertently accommodate and process non-cognate amino acids such as alanine and cysteine, to avoid such errors it has two additional distinct editing activities against alanine. One activity is designated as 'pretransfer' editing and involves the tRNA(Pro)-independent hydrolysis of activated Ala-AMP. The other activity is designated 'posttransfer' editing and involves deacylation of mischarged Ala-tRNA(Pro). The misacylated Cys-tRNA(Pro) is not edited by ProRS.</text>
</comment>
<comment type="catalytic activity">
    <reaction evidence="1">
        <text>tRNA(Pro) + L-proline + ATP = L-prolyl-tRNA(Pro) + AMP + diphosphate</text>
        <dbReference type="Rhea" id="RHEA:14305"/>
        <dbReference type="Rhea" id="RHEA-COMP:9700"/>
        <dbReference type="Rhea" id="RHEA-COMP:9702"/>
        <dbReference type="ChEBI" id="CHEBI:30616"/>
        <dbReference type="ChEBI" id="CHEBI:33019"/>
        <dbReference type="ChEBI" id="CHEBI:60039"/>
        <dbReference type="ChEBI" id="CHEBI:78442"/>
        <dbReference type="ChEBI" id="CHEBI:78532"/>
        <dbReference type="ChEBI" id="CHEBI:456215"/>
        <dbReference type="EC" id="6.1.1.15"/>
    </reaction>
</comment>
<comment type="subunit">
    <text evidence="1">Homodimer.</text>
</comment>
<comment type="subcellular location">
    <subcellularLocation>
        <location evidence="1">Cytoplasm</location>
    </subcellularLocation>
</comment>
<comment type="domain">
    <text evidence="1">Consists of three domains: the N-terminal catalytic domain, the editing domain and the C-terminal anticodon-binding domain.</text>
</comment>
<comment type="similarity">
    <text evidence="1">Belongs to the class-II aminoacyl-tRNA synthetase family. ProS type 1 subfamily.</text>
</comment>
<evidence type="ECO:0000255" key="1">
    <source>
        <dbReference type="HAMAP-Rule" id="MF_01569"/>
    </source>
</evidence>
<accession>Q87MC3</accession>
<dbReference type="EC" id="6.1.1.15" evidence="1"/>
<dbReference type="EMBL" id="BA000031">
    <property type="protein sequence ID" value="BAC60596.1"/>
    <property type="molecule type" value="Genomic_DNA"/>
</dbReference>
<dbReference type="RefSeq" id="NP_798712.1">
    <property type="nucleotide sequence ID" value="NC_004603.1"/>
</dbReference>
<dbReference type="RefSeq" id="WP_005479053.1">
    <property type="nucleotide sequence ID" value="NC_004603.1"/>
</dbReference>
<dbReference type="SMR" id="Q87MC3"/>
<dbReference type="GeneID" id="1189846"/>
<dbReference type="KEGG" id="vpa:VP2333"/>
<dbReference type="PATRIC" id="fig|223926.6.peg.2236"/>
<dbReference type="eggNOG" id="COG0442">
    <property type="taxonomic scope" value="Bacteria"/>
</dbReference>
<dbReference type="HOGENOM" id="CLU_016739_0_0_6"/>
<dbReference type="Proteomes" id="UP000002493">
    <property type="component" value="Chromosome 1"/>
</dbReference>
<dbReference type="GO" id="GO:0005829">
    <property type="term" value="C:cytosol"/>
    <property type="evidence" value="ECO:0007669"/>
    <property type="project" value="TreeGrafter"/>
</dbReference>
<dbReference type="GO" id="GO:0002161">
    <property type="term" value="F:aminoacyl-tRNA deacylase activity"/>
    <property type="evidence" value="ECO:0007669"/>
    <property type="project" value="InterPro"/>
</dbReference>
<dbReference type="GO" id="GO:0005524">
    <property type="term" value="F:ATP binding"/>
    <property type="evidence" value="ECO:0007669"/>
    <property type="project" value="UniProtKB-UniRule"/>
</dbReference>
<dbReference type="GO" id="GO:0004827">
    <property type="term" value="F:proline-tRNA ligase activity"/>
    <property type="evidence" value="ECO:0007669"/>
    <property type="project" value="UniProtKB-UniRule"/>
</dbReference>
<dbReference type="GO" id="GO:0006433">
    <property type="term" value="P:prolyl-tRNA aminoacylation"/>
    <property type="evidence" value="ECO:0007669"/>
    <property type="project" value="UniProtKB-UniRule"/>
</dbReference>
<dbReference type="CDD" id="cd04334">
    <property type="entry name" value="ProRS-INS"/>
    <property type="match status" value="1"/>
</dbReference>
<dbReference type="CDD" id="cd00861">
    <property type="entry name" value="ProRS_anticodon_short"/>
    <property type="match status" value="1"/>
</dbReference>
<dbReference type="CDD" id="cd00779">
    <property type="entry name" value="ProRS_core_prok"/>
    <property type="match status" value="1"/>
</dbReference>
<dbReference type="FunFam" id="3.30.930.10:FF:000015">
    <property type="entry name" value="Proline--tRNA ligase"/>
    <property type="match status" value="1"/>
</dbReference>
<dbReference type="FunFam" id="3.30.930.10:FF:000043">
    <property type="entry name" value="Proline--tRNA ligase"/>
    <property type="match status" value="1"/>
</dbReference>
<dbReference type="FunFam" id="3.40.50.800:FF:000006">
    <property type="entry name" value="Proline--tRNA ligase"/>
    <property type="match status" value="1"/>
</dbReference>
<dbReference type="FunFam" id="3.90.960.10:FF:000001">
    <property type="entry name" value="Proline--tRNA ligase"/>
    <property type="match status" value="1"/>
</dbReference>
<dbReference type="Gene3D" id="3.40.50.800">
    <property type="entry name" value="Anticodon-binding domain"/>
    <property type="match status" value="1"/>
</dbReference>
<dbReference type="Gene3D" id="3.30.930.10">
    <property type="entry name" value="Bira Bifunctional Protein, Domain 2"/>
    <property type="match status" value="2"/>
</dbReference>
<dbReference type="Gene3D" id="3.90.960.10">
    <property type="entry name" value="YbaK/aminoacyl-tRNA synthetase-associated domain"/>
    <property type="match status" value="1"/>
</dbReference>
<dbReference type="HAMAP" id="MF_01569">
    <property type="entry name" value="Pro_tRNA_synth_type1"/>
    <property type="match status" value="1"/>
</dbReference>
<dbReference type="InterPro" id="IPR002314">
    <property type="entry name" value="aa-tRNA-synt_IIb"/>
</dbReference>
<dbReference type="InterPro" id="IPR006195">
    <property type="entry name" value="aa-tRNA-synth_II"/>
</dbReference>
<dbReference type="InterPro" id="IPR045864">
    <property type="entry name" value="aa-tRNA-synth_II/BPL/LPL"/>
</dbReference>
<dbReference type="InterPro" id="IPR004154">
    <property type="entry name" value="Anticodon-bd"/>
</dbReference>
<dbReference type="InterPro" id="IPR036621">
    <property type="entry name" value="Anticodon-bd_dom_sf"/>
</dbReference>
<dbReference type="InterPro" id="IPR002316">
    <property type="entry name" value="Pro-tRNA-ligase_IIa"/>
</dbReference>
<dbReference type="InterPro" id="IPR004500">
    <property type="entry name" value="Pro-tRNA-synth_IIa_bac-type"/>
</dbReference>
<dbReference type="InterPro" id="IPR023717">
    <property type="entry name" value="Pro-tRNA-Synthase_IIa_type1"/>
</dbReference>
<dbReference type="InterPro" id="IPR050062">
    <property type="entry name" value="Pro-tRNA_synthetase"/>
</dbReference>
<dbReference type="InterPro" id="IPR044140">
    <property type="entry name" value="ProRS_anticodon_short"/>
</dbReference>
<dbReference type="InterPro" id="IPR033730">
    <property type="entry name" value="ProRS_core_prok"/>
</dbReference>
<dbReference type="InterPro" id="IPR036754">
    <property type="entry name" value="YbaK/aa-tRNA-synt-asso_dom_sf"/>
</dbReference>
<dbReference type="InterPro" id="IPR007214">
    <property type="entry name" value="YbaK/aa-tRNA-synth-assoc-dom"/>
</dbReference>
<dbReference type="NCBIfam" id="NF006625">
    <property type="entry name" value="PRK09194.1"/>
    <property type="match status" value="1"/>
</dbReference>
<dbReference type="NCBIfam" id="TIGR00409">
    <property type="entry name" value="proS_fam_II"/>
    <property type="match status" value="1"/>
</dbReference>
<dbReference type="PANTHER" id="PTHR42753">
    <property type="entry name" value="MITOCHONDRIAL RIBOSOME PROTEIN L39/PROLYL-TRNA LIGASE FAMILY MEMBER"/>
    <property type="match status" value="1"/>
</dbReference>
<dbReference type="PANTHER" id="PTHR42753:SF2">
    <property type="entry name" value="PROLINE--TRNA LIGASE"/>
    <property type="match status" value="1"/>
</dbReference>
<dbReference type="Pfam" id="PF03129">
    <property type="entry name" value="HGTP_anticodon"/>
    <property type="match status" value="1"/>
</dbReference>
<dbReference type="Pfam" id="PF00587">
    <property type="entry name" value="tRNA-synt_2b"/>
    <property type="match status" value="1"/>
</dbReference>
<dbReference type="Pfam" id="PF04073">
    <property type="entry name" value="tRNA_edit"/>
    <property type="match status" value="1"/>
</dbReference>
<dbReference type="PIRSF" id="PIRSF001535">
    <property type="entry name" value="ProRS_1"/>
    <property type="match status" value="1"/>
</dbReference>
<dbReference type="PRINTS" id="PR01046">
    <property type="entry name" value="TRNASYNTHPRO"/>
</dbReference>
<dbReference type="SUPFAM" id="SSF52954">
    <property type="entry name" value="Class II aaRS ABD-related"/>
    <property type="match status" value="1"/>
</dbReference>
<dbReference type="SUPFAM" id="SSF55681">
    <property type="entry name" value="Class II aaRS and biotin synthetases"/>
    <property type="match status" value="1"/>
</dbReference>
<dbReference type="SUPFAM" id="SSF55826">
    <property type="entry name" value="YbaK/ProRS associated domain"/>
    <property type="match status" value="1"/>
</dbReference>
<dbReference type="PROSITE" id="PS50862">
    <property type="entry name" value="AA_TRNA_LIGASE_II"/>
    <property type="match status" value="1"/>
</dbReference>
<protein>
    <recommendedName>
        <fullName evidence="1">Proline--tRNA ligase</fullName>
        <ecNumber evidence="1">6.1.1.15</ecNumber>
    </recommendedName>
    <alternativeName>
        <fullName evidence="1">Prolyl-tRNA synthetase</fullName>
        <shortName evidence="1">ProRS</shortName>
    </alternativeName>
</protein>
<name>SYP_VIBPA</name>
<organism>
    <name type="scientific">Vibrio parahaemolyticus serotype O3:K6 (strain RIMD 2210633)</name>
    <dbReference type="NCBI Taxonomy" id="223926"/>
    <lineage>
        <taxon>Bacteria</taxon>
        <taxon>Pseudomonadati</taxon>
        <taxon>Pseudomonadota</taxon>
        <taxon>Gammaproteobacteria</taxon>
        <taxon>Vibrionales</taxon>
        <taxon>Vibrionaceae</taxon>
        <taxon>Vibrio</taxon>
    </lineage>
</organism>
<reference key="1">
    <citation type="journal article" date="2003" name="Lancet">
        <title>Genome sequence of Vibrio parahaemolyticus: a pathogenic mechanism distinct from that of V. cholerae.</title>
        <authorList>
            <person name="Makino K."/>
            <person name="Oshima K."/>
            <person name="Kurokawa K."/>
            <person name="Yokoyama K."/>
            <person name="Uda T."/>
            <person name="Tagomori K."/>
            <person name="Iijima Y."/>
            <person name="Najima M."/>
            <person name="Nakano M."/>
            <person name="Yamashita A."/>
            <person name="Kubota Y."/>
            <person name="Kimura S."/>
            <person name="Yasunaga T."/>
            <person name="Honda T."/>
            <person name="Shinagawa H."/>
            <person name="Hattori M."/>
            <person name="Iida T."/>
        </authorList>
    </citation>
    <scope>NUCLEOTIDE SEQUENCE [LARGE SCALE GENOMIC DNA]</scope>
    <source>
        <strain>RIMD 2210633</strain>
    </source>
</reference>
<sequence length="571" mass="63256">MRTSNYLLSTLKETPNDAEVVSHQLMLRAGMIRKLASGLYTWLPTGLRVLRKVENIVRQEIDNAGAVETLMPVVQPFELWEETGRSEKMGPELLRFTDRHVRPFVLSPTAEEVITSLVRNEVSSYKQLPLNLYQIQTKFRDERRPRFGVMRAREFCMMDAYSFDIDKAGLEKSYQAMHDAYCKAFDRMGLEYRPVLADSGAIGGSGSQEFHVLADSGEDLIAFSTESDYAANIEKAEALAPAVERAEPTQEMTLVDTPNAKTIAELVEQHGLPIEKTVKTLFVKASDEIDAPIIALIVRGDHELNEVKAENLPQVASPLEMASEEEIRELIGAGPGSLGPVGLELPFIVDRSVAVMSDFGAGANIDGKHYFGINWGRDVELGQVEDLRNVVEGDPSPCGKGTLMLKRGIEVGHIFQLGNVYSEAMNCSVLGPDGKNVILEMGCYGIGVSRVVASAIEQNHDKYGIIWPDAIAPFQVAIVPMNMHKSERVKEAAEKLYAELTAMGIEVLFDDRKERPGVMFSDIELIGIPHTIVIGDRSMDEGNFEYKNRRTGEKTPVAMADIVEHVKSQLK</sequence>
<feature type="chain" id="PRO_0000248810" description="Proline--tRNA ligase">
    <location>
        <begin position="1"/>
        <end position="571"/>
    </location>
</feature>